<dbReference type="EC" id="5.4.2.10" evidence="1"/>
<dbReference type="EMBL" id="CP000308">
    <property type="protein sequence ID" value="ABG12019.1"/>
    <property type="molecule type" value="Genomic_DNA"/>
</dbReference>
<dbReference type="RefSeq" id="WP_002210189.1">
    <property type="nucleotide sequence ID" value="NZ_CP009906.1"/>
</dbReference>
<dbReference type="SMR" id="Q1CC03"/>
<dbReference type="GeneID" id="57975214"/>
<dbReference type="KEGG" id="ypa:YPA_0050"/>
<dbReference type="Proteomes" id="UP000001971">
    <property type="component" value="Chromosome"/>
</dbReference>
<dbReference type="GO" id="GO:0005829">
    <property type="term" value="C:cytosol"/>
    <property type="evidence" value="ECO:0007669"/>
    <property type="project" value="TreeGrafter"/>
</dbReference>
<dbReference type="GO" id="GO:0000287">
    <property type="term" value="F:magnesium ion binding"/>
    <property type="evidence" value="ECO:0007669"/>
    <property type="project" value="UniProtKB-UniRule"/>
</dbReference>
<dbReference type="GO" id="GO:0008966">
    <property type="term" value="F:phosphoglucosamine mutase activity"/>
    <property type="evidence" value="ECO:0007669"/>
    <property type="project" value="UniProtKB-UniRule"/>
</dbReference>
<dbReference type="GO" id="GO:0004615">
    <property type="term" value="F:phosphomannomutase activity"/>
    <property type="evidence" value="ECO:0007669"/>
    <property type="project" value="TreeGrafter"/>
</dbReference>
<dbReference type="GO" id="GO:0005975">
    <property type="term" value="P:carbohydrate metabolic process"/>
    <property type="evidence" value="ECO:0007669"/>
    <property type="project" value="InterPro"/>
</dbReference>
<dbReference type="GO" id="GO:0009252">
    <property type="term" value="P:peptidoglycan biosynthetic process"/>
    <property type="evidence" value="ECO:0007669"/>
    <property type="project" value="TreeGrafter"/>
</dbReference>
<dbReference type="GO" id="GO:0006048">
    <property type="term" value="P:UDP-N-acetylglucosamine biosynthetic process"/>
    <property type="evidence" value="ECO:0007669"/>
    <property type="project" value="TreeGrafter"/>
</dbReference>
<dbReference type="CDD" id="cd05802">
    <property type="entry name" value="GlmM"/>
    <property type="match status" value="1"/>
</dbReference>
<dbReference type="FunFam" id="3.30.310.50:FF:000001">
    <property type="entry name" value="Phosphoglucosamine mutase"/>
    <property type="match status" value="1"/>
</dbReference>
<dbReference type="FunFam" id="3.40.120.10:FF:000001">
    <property type="entry name" value="Phosphoglucosamine mutase"/>
    <property type="match status" value="1"/>
</dbReference>
<dbReference type="FunFam" id="3.40.120.10:FF:000002">
    <property type="entry name" value="Phosphoglucosamine mutase"/>
    <property type="match status" value="1"/>
</dbReference>
<dbReference type="Gene3D" id="3.40.120.10">
    <property type="entry name" value="Alpha-D-Glucose-1,6-Bisphosphate, subunit A, domain 3"/>
    <property type="match status" value="3"/>
</dbReference>
<dbReference type="Gene3D" id="3.30.310.50">
    <property type="entry name" value="Alpha-D-phosphohexomutase, C-terminal domain"/>
    <property type="match status" value="1"/>
</dbReference>
<dbReference type="HAMAP" id="MF_01554_B">
    <property type="entry name" value="GlmM_B"/>
    <property type="match status" value="1"/>
</dbReference>
<dbReference type="InterPro" id="IPR005844">
    <property type="entry name" value="A-D-PHexomutase_a/b/a-I"/>
</dbReference>
<dbReference type="InterPro" id="IPR016055">
    <property type="entry name" value="A-D-PHexomutase_a/b/a-I/II/III"/>
</dbReference>
<dbReference type="InterPro" id="IPR005845">
    <property type="entry name" value="A-D-PHexomutase_a/b/a-II"/>
</dbReference>
<dbReference type="InterPro" id="IPR005846">
    <property type="entry name" value="A-D-PHexomutase_a/b/a-III"/>
</dbReference>
<dbReference type="InterPro" id="IPR005843">
    <property type="entry name" value="A-D-PHexomutase_C"/>
</dbReference>
<dbReference type="InterPro" id="IPR036900">
    <property type="entry name" value="A-D-PHexomutase_C_sf"/>
</dbReference>
<dbReference type="InterPro" id="IPR016066">
    <property type="entry name" value="A-D-PHexomutase_CS"/>
</dbReference>
<dbReference type="InterPro" id="IPR005841">
    <property type="entry name" value="Alpha-D-phosphohexomutase_SF"/>
</dbReference>
<dbReference type="InterPro" id="IPR006352">
    <property type="entry name" value="GlmM_bact"/>
</dbReference>
<dbReference type="InterPro" id="IPR050060">
    <property type="entry name" value="Phosphoglucosamine_mutase"/>
</dbReference>
<dbReference type="NCBIfam" id="TIGR01455">
    <property type="entry name" value="glmM"/>
    <property type="match status" value="1"/>
</dbReference>
<dbReference type="NCBIfam" id="NF008139">
    <property type="entry name" value="PRK10887.1"/>
    <property type="match status" value="1"/>
</dbReference>
<dbReference type="PANTHER" id="PTHR42946:SF1">
    <property type="entry name" value="PHOSPHOGLUCOMUTASE (ALPHA-D-GLUCOSE-1,6-BISPHOSPHATE-DEPENDENT)"/>
    <property type="match status" value="1"/>
</dbReference>
<dbReference type="PANTHER" id="PTHR42946">
    <property type="entry name" value="PHOSPHOHEXOSE MUTASE"/>
    <property type="match status" value="1"/>
</dbReference>
<dbReference type="Pfam" id="PF02878">
    <property type="entry name" value="PGM_PMM_I"/>
    <property type="match status" value="1"/>
</dbReference>
<dbReference type="Pfam" id="PF02879">
    <property type="entry name" value="PGM_PMM_II"/>
    <property type="match status" value="1"/>
</dbReference>
<dbReference type="Pfam" id="PF02880">
    <property type="entry name" value="PGM_PMM_III"/>
    <property type="match status" value="1"/>
</dbReference>
<dbReference type="Pfam" id="PF00408">
    <property type="entry name" value="PGM_PMM_IV"/>
    <property type="match status" value="1"/>
</dbReference>
<dbReference type="PRINTS" id="PR00509">
    <property type="entry name" value="PGMPMM"/>
</dbReference>
<dbReference type="SUPFAM" id="SSF55957">
    <property type="entry name" value="Phosphoglucomutase, C-terminal domain"/>
    <property type="match status" value="1"/>
</dbReference>
<dbReference type="SUPFAM" id="SSF53738">
    <property type="entry name" value="Phosphoglucomutase, first 3 domains"/>
    <property type="match status" value="3"/>
</dbReference>
<dbReference type="PROSITE" id="PS00710">
    <property type="entry name" value="PGM_PMM"/>
    <property type="match status" value="1"/>
</dbReference>
<protein>
    <recommendedName>
        <fullName evidence="1">Phosphoglucosamine mutase</fullName>
        <ecNumber evidence="1">5.4.2.10</ecNumber>
    </recommendedName>
</protein>
<sequence length="446" mass="47898">MSNRKYFGTDGIRGKVGESPITPDFVLKLGWAAGKVLARHGSRKIIIGKDTRISGYMLESALEAGLAAAGLSALFTGPMPTPAVAYLTRTFRAEAGIVISASHNPFYDNGIKFFSIDGTKLPDDVEEAIEAEMEKPLTCVESAELGKANRIVDAAGRYIEFCKGTFPSELSLNELKIVVDCANGATYHIAPSVLRELGATVITIGCEPDGMNINEECGATDVRLLQERVLAEGAHVGLAFDGDGDRLMMVDHLGNKVDGDQILYIIAREGLRQGQLKGGAVGTLMSNMGLQLALKDLGIPFVRAKVGDRYVLEAMQEKGWRIGAENSGHVILLDKTTTGDGIVAGLQVLTAMVRNHMSLHDLCSGMKLLPQILVNVRFSGEHNPLKSDEVEEVTRQVEKELGGRGRVLLRKSGTEPLIRVMVEGDAEESLIAEMANRIADAVKAAG</sequence>
<gene>
    <name evidence="1" type="primary">glmM</name>
    <name type="ordered locus">YPA_0050</name>
</gene>
<name>GLMM_YERPA</name>
<reference key="1">
    <citation type="journal article" date="2006" name="J. Bacteriol.">
        <title>Complete genome sequence of Yersinia pestis strains Antiqua and Nepal516: evidence of gene reduction in an emerging pathogen.</title>
        <authorList>
            <person name="Chain P.S.G."/>
            <person name="Hu P."/>
            <person name="Malfatti S.A."/>
            <person name="Radnedge L."/>
            <person name="Larimer F."/>
            <person name="Vergez L.M."/>
            <person name="Worsham P."/>
            <person name="Chu M.C."/>
            <person name="Andersen G.L."/>
        </authorList>
    </citation>
    <scope>NUCLEOTIDE SEQUENCE [LARGE SCALE GENOMIC DNA]</scope>
    <source>
        <strain>Antiqua</strain>
    </source>
</reference>
<keyword id="KW-0413">Isomerase</keyword>
<keyword id="KW-0460">Magnesium</keyword>
<keyword id="KW-0479">Metal-binding</keyword>
<keyword id="KW-0597">Phosphoprotein</keyword>
<accession>Q1CC03</accession>
<comment type="function">
    <text evidence="1">Catalyzes the conversion of glucosamine-6-phosphate to glucosamine-1-phosphate.</text>
</comment>
<comment type="catalytic activity">
    <reaction evidence="1">
        <text>alpha-D-glucosamine 1-phosphate = D-glucosamine 6-phosphate</text>
        <dbReference type="Rhea" id="RHEA:23424"/>
        <dbReference type="ChEBI" id="CHEBI:58516"/>
        <dbReference type="ChEBI" id="CHEBI:58725"/>
        <dbReference type="EC" id="5.4.2.10"/>
    </reaction>
</comment>
<comment type="cofactor">
    <cofactor evidence="1">
        <name>Mg(2+)</name>
        <dbReference type="ChEBI" id="CHEBI:18420"/>
    </cofactor>
    <text evidence="1">Binds 1 Mg(2+) ion per subunit.</text>
</comment>
<comment type="PTM">
    <text evidence="1">Activated by phosphorylation.</text>
</comment>
<comment type="similarity">
    <text evidence="1">Belongs to the phosphohexose mutase family.</text>
</comment>
<evidence type="ECO:0000255" key="1">
    <source>
        <dbReference type="HAMAP-Rule" id="MF_01554"/>
    </source>
</evidence>
<proteinExistence type="inferred from homology"/>
<organism>
    <name type="scientific">Yersinia pestis bv. Antiqua (strain Antiqua)</name>
    <dbReference type="NCBI Taxonomy" id="360102"/>
    <lineage>
        <taxon>Bacteria</taxon>
        <taxon>Pseudomonadati</taxon>
        <taxon>Pseudomonadota</taxon>
        <taxon>Gammaproteobacteria</taxon>
        <taxon>Enterobacterales</taxon>
        <taxon>Yersiniaceae</taxon>
        <taxon>Yersinia</taxon>
    </lineage>
</organism>
<feature type="chain" id="PRO_0000301404" description="Phosphoglucosamine mutase">
    <location>
        <begin position="1"/>
        <end position="446"/>
    </location>
</feature>
<feature type="active site" description="Phosphoserine intermediate" evidence="1">
    <location>
        <position position="102"/>
    </location>
</feature>
<feature type="binding site" description="via phosphate group" evidence="1">
    <location>
        <position position="102"/>
    </location>
    <ligand>
        <name>Mg(2+)</name>
        <dbReference type="ChEBI" id="CHEBI:18420"/>
    </ligand>
</feature>
<feature type="binding site" evidence="1">
    <location>
        <position position="241"/>
    </location>
    <ligand>
        <name>Mg(2+)</name>
        <dbReference type="ChEBI" id="CHEBI:18420"/>
    </ligand>
</feature>
<feature type="binding site" evidence="1">
    <location>
        <position position="243"/>
    </location>
    <ligand>
        <name>Mg(2+)</name>
        <dbReference type="ChEBI" id="CHEBI:18420"/>
    </ligand>
</feature>
<feature type="binding site" evidence="1">
    <location>
        <position position="245"/>
    </location>
    <ligand>
        <name>Mg(2+)</name>
        <dbReference type="ChEBI" id="CHEBI:18420"/>
    </ligand>
</feature>
<feature type="modified residue" description="Phosphoserine" evidence="1">
    <location>
        <position position="102"/>
    </location>
</feature>